<sequence length="40" mass="4161">MADTTGRIPLWLIGTVTGIIVIGLLGIFFYGSYSGLGSSL</sequence>
<dbReference type="EMBL" id="AY228468">
    <property type="protein sequence ID" value="AAO74035.1"/>
    <property type="molecule type" value="Genomic_DNA"/>
</dbReference>
<dbReference type="RefSeq" id="NP_817187.1">
    <property type="nucleotide sequence ID" value="NC_004677.2"/>
</dbReference>
<dbReference type="SMR" id="Q85X30"/>
<dbReference type="GeneID" id="806912"/>
<dbReference type="GO" id="GO:0009535">
    <property type="term" value="C:chloroplast thylakoid membrane"/>
    <property type="evidence" value="ECO:0007669"/>
    <property type="project" value="UniProtKB-SubCell"/>
</dbReference>
<dbReference type="GO" id="GO:0009539">
    <property type="term" value="C:photosystem II reaction center"/>
    <property type="evidence" value="ECO:0007669"/>
    <property type="project" value="InterPro"/>
</dbReference>
<dbReference type="GO" id="GO:0015979">
    <property type="term" value="P:photosynthesis"/>
    <property type="evidence" value="ECO:0007669"/>
    <property type="project" value="UniProtKB-UniRule"/>
</dbReference>
<dbReference type="Gene3D" id="6.10.250.2070">
    <property type="match status" value="1"/>
</dbReference>
<dbReference type="HAMAP" id="MF_01305">
    <property type="entry name" value="PSII_PsbJ"/>
    <property type="match status" value="1"/>
</dbReference>
<dbReference type="InterPro" id="IPR002682">
    <property type="entry name" value="PSII_PsbJ"/>
</dbReference>
<dbReference type="InterPro" id="IPR037267">
    <property type="entry name" value="PSII_PsbJ_sf"/>
</dbReference>
<dbReference type="NCBIfam" id="NF002722">
    <property type="entry name" value="PRK02565.1"/>
    <property type="match status" value="1"/>
</dbReference>
<dbReference type="PANTHER" id="PTHR34812">
    <property type="entry name" value="PHOTOSYSTEM II REACTION CENTER PROTEIN J"/>
    <property type="match status" value="1"/>
</dbReference>
<dbReference type="PANTHER" id="PTHR34812:SF3">
    <property type="entry name" value="PHOTOSYSTEM II REACTION CENTER PROTEIN J"/>
    <property type="match status" value="1"/>
</dbReference>
<dbReference type="Pfam" id="PF01788">
    <property type="entry name" value="PsbJ"/>
    <property type="match status" value="1"/>
</dbReference>
<dbReference type="SUPFAM" id="SSF161021">
    <property type="entry name" value="Photosystem II reaction center protein J, PsbJ"/>
    <property type="match status" value="1"/>
</dbReference>
<gene>
    <name evidence="1" type="primary">psbJ</name>
</gene>
<protein>
    <recommendedName>
        <fullName evidence="1">Photosystem II reaction center protein J</fullName>
        <shortName evidence="1">PSII-J</shortName>
    </recommendedName>
</protein>
<reference key="1">
    <citation type="submission" date="2003-02" db="EMBL/GenBank/DDBJ databases">
        <title>Complete nucleotide sequence of Pinus koraiensis.</title>
        <authorList>
            <person name="Noh E.W."/>
            <person name="Lee J.S."/>
            <person name="Choi Y.I."/>
            <person name="Han M.S."/>
            <person name="Yi Y.S."/>
            <person name="Han S.U."/>
        </authorList>
    </citation>
    <scope>NUCLEOTIDE SEQUENCE [LARGE SCALE GENOMIC DNA]</scope>
    <source>
        <strain>KangWon16</strain>
    </source>
</reference>
<name>PSBJ_PINKO</name>
<comment type="function">
    <text evidence="1">One of the components of the core complex of photosystem II (PSII). PSII is a light-driven water:plastoquinone oxidoreductase that uses light energy to abstract electrons from H(2)O, generating O(2) and a proton gradient subsequently used for ATP formation. It consists of a core antenna complex that captures photons, and an electron transfer chain that converts photonic excitation into a charge separation.</text>
</comment>
<comment type="subunit">
    <text evidence="1">PSII is composed of 1 copy each of membrane proteins PsbA, PsbB, PsbC, PsbD, PsbE, PsbF, PsbH, PsbI, PsbJ, PsbK, PsbL, PsbM, PsbT, PsbX, PsbY, PsbZ, Psb30/Ycf12, at least 3 peripheral proteins of the oxygen-evolving complex and a large number of cofactors. It forms dimeric complexes.</text>
</comment>
<comment type="subcellular location">
    <subcellularLocation>
        <location evidence="1">Plastid</location>
        <location evidence="1">Chloroplast thylakoid membrane</location>
        <topology evidence="1">Single-pass membrane protein</topology>
    </subcellularLocation>
</comment>
<comment type="similarity">
    <text evidence="1">Belongs to the PsbJ family.</text>
</comment>
<accession>Q85X30</accession>
<feature type="chain" id="PRO_0000216611" description="Photosystem II reaction center protein J">
    <location>
        <begin position="1"/>
        <end position="40"/>
    </location>
</feature>
<feature type="transmembrane region" description="Helical" evidence="1">
    <location>
        <begin position="8"/>
        <end position="28"/>
    </location>
</feature>
<evidence type="ECO:0000255" key="1">
    <source>
        <dbReference type="HAMAP-Rule" id="MF_01305"/>
    </source>
</evidence>
<organism>
    <name type="scientific">Pinus koraiensis</name>
    <name type="common">Korean pine</name>
    <dbReference type="NCBI Taxonomy" id="88728"/>
    <lineage>
        <taxon>Eukaryota</taxon>
        <taxon>Viridiplantae</taxon>
        <taxon>Streptophyta</taxon>
        <taxon>Embryophyta</taxon>
        <taxon>Tracheophyta</taxon>
        <taxon>Spermatophyta</taxon>
        <taxon>Pinopsida</taxon>
        <taxon>Pinidae</taxon>
        <taxon>Conifers I</taxon>
        <taxon>Pinales</taxon>
        <taxon>Pinaceae</taxon>
        <taxon>Pinus</taxon>
        <taxon>Pinus subgen. Strobus</taxon>
    </lineage>
</organism>
<keyword id="KW-0150">Chloroplast</keyword>
<keyword id="KW-0472">Membrane</keyword>
<keyword id="KW-0602">Photosynthesis</keyword>
<keyword id="KW-0604">Photosystem II</keyword>
<keyword id="KW-0934">Plastid</keyword>
<keyword id="KW-0674">Reaction center</keyword>
<keyword id="KW-0793">Thylakoid</keyword>
<keyword id="KW-0812">Transmembrane</keyword>
<keyword id="KW-1133">Transmembrane helix</keyword>
<geneLocation type="chloroplast"/>
<proteinExistence type="inferred from homology"/>